<keyword id="KW-0251">Elongation factor</keyword>
<keyword id="KW-0648">Protein biosynthesis</keyword>
<keyword id="KW-1185">Reference proteome</keyword>
<reference key="1">
    <citation type="journal article" date="2005" name="J. Bacteriol.">
        <title>The genome of Sulfolobus acidocaldarius, a model organism of the Crenarchaeota.</title>
        <authorList>
            <person name="Chen L."/>
            <person name="Bruegger K."/>
            <person name="Skovgaard M."/>
            <person name="Redder P."/>
            <person name="She Q."/>
            <person name="Torarinsson E."/>
            <person name="Greve B."/>
            <person name="Awayez M."/>
            <person name="Zibat A."/>
            <person name="Klenk H.-P."/>
            <person name="Garrett R.A."/>
        </authorList>
    </citation>
    <scope>NUCLEOTIDE SEQUENCE [LARGE SCALE GENOMIC DNA]</scope>
    <source>
        <strain>ATCC 33909 / DSM 639 / JCM 8929 / NBRC 15157 / NCIMB 11770</strain>
    </source>
</reference>
<organism>
    <name type="scientific">Sulfolobus acidocaldarius (strain ATCC 33909 / DSM 639 / JCM 8929 / NBRC 15157 / NCIMB 11770)</name>
    <dbReference type="NCBI Taxonomy" id="330779"/>
    <lineage>
        <taxon>Archaea</taxon>
        <taxon>Thermoproteota</taxon>
        <taxon>Thermoprotei</taxon>
        <taxon>Sulfolobales</taxon>
        <taxon>Sulfolobaceae</taxon>
        <taxon>Sulfolobus</taxon>
    </lineage>
</organism>
<sequence length="90" mass="10058">MDVLVILKVFPESDEINLTQLSEEIKKRLPEGYRLVKNETEPIAYGLKALIAYIQMPENTEGGTDKLEELVNGIEGVSHAEVVNVTRLGF</sequence>
<dbReference type="EMBL" id="CP000077">
    <property type="protein sequence ID" value="AAY80145.1"/>
    <property type="status" value="ALT_INIT"/>
    <property type="molecule type" value="Genomic_DNA"/>
</dbReference>
<dbReference type="SMR" id="Q4JAN4"/>
<dbReference type="STRING" id="330779.Saci_0772"/>
<dbReference type="KEGG" id="sai:Saci_0772"/>
<dbReference type="PATRIC" id="fig|330779.12.peg.738"/>
<dbReference type="eggNOG" id="arCOG01988">
    <property type="taxonomic scope" value="Archaea"/>
</dbReference>
<dbReference type="HOGENOM" id="CLU_165896_1_0_2"/>
<dbReference type="Proteomes" id="UP000001018">
    <property type="component" value="Chromosome"/>
</dbReference>
<dbReference type="GO" id="GO:0003746">
    <property type="term" value="F:translation elongation factor activity"/>
    <property type="evidence" value="ECO:0007669"/>
    <property type="project" value="UniProtKB-UniRule"/>
</dbReference>
<dbReference type="CDD" id="cd00292">
    <property type="entry name" value="EF1B"/>
    <property type="match status" value="1"/>
</dbReference>
<dbReference type="Gene3D" id="3.30.70.60">
    <property type="match status" value="1"/>
</dbReference>
<dbReference type="HAMAP" id="MF_00043">
    <property type="entry name" value="EF1_beta"/>
    <property type="match status" value="1"/>
</dbReference>
<dbReference type="InterPro" id="IPR036219">
    <property type="entry name" value="eEF-1beta-like_sf"/>
</dbReference>
<dbReference type="InterPro" id="IPR014038">
    <property type="entry name" value="EF1B_bsu/dsu_GNE"/>
</dbReference>
<dbReference type="InterPro" id="IPR014717">
    <property type="entry name" value="Transl_elong_EF1B/ribsomal_bS6"/>
</dbReference>
<dbReference type="InterPro" id="IPR004542">
    <property type="entry name" value="Transl_elong_EF1B_B_arc"/>
</dbReference>
<dbReference type="NCBIfam" id="TIGR00489">
    <property type="entry name" value="aEF-1_beta"/>
    <property type="match status" value="1"/>
</dbReference>
<dbReference type="NCBIfam" id="NF001670">
    <property type="entry name" value="PRK00435.1"/>
    <property type="match status" value="1"/>
</dbReference>
<dbReference type="PANTHER" id="PTHR39647">
    <property type="entry name" value="ELONGATION FACTOR 1-BETA"/>
    <property type="match status" value="1"/>
</dbReference>
<dbReference type="PANTHER" id="PTHR39647:SF1">
    <property type="entry name" value="ELONGATION FACTOR 1-BETA"/>
    <property type="match status" value="1"/>
</dbReference>
<dbReference type="Pfam" id="PF00736">
    <property type="entry name" value="EF1_GNE"/>
    <property type="match status" value="1"/>
</dbReference>
<dbReference type="PIRSF" id="PIRSF006521">
    <property type="entry name" value="Transl_elong_EF1B_B_arc"/>
    <property type="match status" value="1"/>
</dbReference>
<dbReference type="SMART" id="SM00888">
    <property type="entry name" value="EF1_GNE"/>
    <property type="match status" value="1"/>
</dbReference>
<dbReference type="SUPFAM" id="SSF54984">
    <property type="entry name" value="eEF-1beta-like"/>
    <property type="match status" value="1"/>
</dbReference>
<protein>
    <recommendedName>
        <fullName evidence="1">Elongation factor 1-beta</fullName>
        <shortName evidence="1">EF-1-beta</shortName>
    </recommendedName>
    <alternativeName>
        <fullName evidence="1">aEF-1beta</fullName>
    </alternativeName>
</protein>
<feature type="chain" id="PRO_0000155067" description="Elongation factor 1-beta">
    <location>
        <begin position="1"/>
        <end position="90"/>
    </location>
</feature>
<comment type="function">
    <text evidence="1">Promotes the exchange of GDP for GTP in EF-1-alpha/GDP, thus allowing the regeneration of EF-1-alpha/GTP that could then be used to form the ternary complex EF-1-alpha/GTP/AAtRNA.</text>
</comment>
<comment type="similarity">
    <text evidence="1">Belongs to the EF-1-beta/EF-1-delta family.</text>
</comment>
<comment type="sequence caution" evidence="2">
    <conflict type="erroneous initiation">
        <sequence resource="EMBL-CDS" id="AAY80145"/>
    </conflict>
</comment>
<proteinExistence type="inferred from homology"/>
<accession>Q4JAN4</accession>
<evidence type="ECO:0000255" key="1">
    <source>
        <dbReference type="HAMAP-Rule" id="MF_00043"/>
    </source>
</evidence>
<evidence type="ECO:0000305" key="2"/>
<gene>
    <name evidence="1" type="primary">ef1b</name>
    <name type="ordered locus">Saci_0772</name>
</gene>
<name>EF1B_SULAC</name>